<gene>
    <name evidence="1" type="primary">PIM1</name>
    <name type="ORF">PICST_64463</name>
</gene>
<evidence type="ECO:0000255" key="1">
    <source>
        <dbReference type="HAMAP-Rule" id="MF_03120"/>
    </source>
</evidence>
<evidence type="ECO:0000255" key="2">
    <source>
        <dbReference type="PROSITE-ProRule" id="PRU01122"/>
    </source>
</evidence>
<evidence type="ECO:0000255" key="3">
    <source>
        <dbReference type="PROSITE-ProRule" id="PRU01123"/>
    </source>
</evidence>
<evidence type="ECO:0000256" key="4">
    <source>
        <dbReference type="SAM" id="MobiDB-lite"/>
    </source>
</evidence>
<evidence type="ECO:0000305" key="5"/>
<organism>
    <name type="scientific">Scheffersomyces stipitis (strain ATCC 58785 / CBS 6054 / NBRC 10063 / NRRL Y-11545)</name>
    <name type="common">Yeast</name>
    <name type="synonym">Pichia stipitis</name>
    <dbReference type="NCBI Taxonomy" id="322104"/>
    <lineage>
        <taxon>Eukaryota</taxon>
        <taxon>Fungi</taxon>
        <taxon>Dikarya</taxon>
        <taxon>Ascomycota</taxon>
        <taxon>Saccharomycotina</taxon>
        <taxon>Pichiomycetes</taxon>
        <taxon>Debaryomycetaceae</taxon>
        <taxon>Scheffersomyces</taxon>
    </lineage>
</organism>
<feature type="transit peptide" description="Mitochondrion" evidence="1">
    <location>
        <begin position="1"/>
        <end position="55"/>
    </location>
</feature>
<feature type="chain" id="PRO_0000395782" description="Lon protease homolog, mitochondrial">
    <location>
        <begin position="56"/>
        <end position="1086"/>
    </location>
</feature>
<feature type="domain" description="Lon N-terminal" evidence="3">
    <location>
        <begin position="183"/>
        <end position="406"/>
    </location>
</feature>
<feature type="domain" description="Lon proteolytic" evidence="2">
    <location>
        <begin position="871"/>
        <end position="1059"/>
    </location>
</feature>
<feature type="region of interest" description="Disordered" evidence="4">
    <location>
        <begin position="61"/>
        <end position="176"/>
    </location>
</feature>
<feature type="region of interest" description="Disordered" evidence="4">
    <location>
        <begin position="767"/>
        <end position="788"/>
    </location>
</feature>
<feature type="region of interest" description="Disordered" evidence="4">
    <location>
        <begin position="800"/>
        <end position="835"/>
    </location>
</feature>
<feature type="compositionally biased region" description="Low complexity" evidence="4">
    <location>
        <begin position="69"/>
        <end position="83"/>
    </location>
</feature>
<feature type="compositionally biased region" description="Basic and acidic residues" evidence="4">
    <location>
        <begin position="85"/>
        <end position="120"/>
    </location>
</feature>
<feature type="compositionally biased region" description="Low complexity" evidence="4">
    <location>
        <begin position="124"/>
        <end position="163"/>
    </location>
</feature>
<feature type="compositionally biased region" description="Basic and acidic residues" evidence="4">
    <location>
        <begin position="767"/>
        <end position="782"/>
    </location>
</feature>
<feature type="compositionally biased region" description="Basic and acidic residues" evidence="4">
    <location>
        <begin position="815"/>
        <end position="827"/>
    </location>
</feature>
<feature type="active site" evidence="1">
    <location>
        <position position="965"/>
    </location>
</feature>
<feature type="active site" evidence="1">
    <location>
        <position position="1008"/>
    </location>
</feature>
<feature type="binding site" evidence="1">
    <location>
        <begin position="558"/>
        <end position="565"/>
    </location>
    <ligand>
        <name>ATP</name>
        <dbReference type="ChEBI" id="CHEBI:30616"/>
    </ligand>
</feature>
<feature type="non-terminal residue">
    <location>
        <position position="1"/>
    </location>
</feature>
<accession>A3M072</accession>
<name>LONM_PICST</name>
<reference key="1">
    <citation type="journal article" date="2007" name="Nat. Biotechnol.">
        <title>Genome sequence of the lignocellulose-bioconverting and xylose-fermenting yeast Pichia stipitis.</title>
        <authorList>
            <person name="Jeffries T.W."/>
            <person name="Grigoriev I.V."/>
            <person name="Grimwood J."/>
            <person name="Laplaza J.M."/>
            <person name="Aerts A."/>
            <person name="Salamov A."/>
            <person name="Schmutz J."/>
            <person name="Lindquist E."/>
            <person name="Dehal P."/>
            <person name="Shapiro H."/>
            <person name="Jin Y.-S."/>
            <person name="Passoth V."/>
            <person name="Richardson P.M."/>
        </authorList>
    </citation>
    <scope>NUCLEOTIDE SEQUENCE [LARGE SCALE GENOMIC DNA]</scope>
    <source>
        <strain>ATCC 58785 / CBS 6054 / NBRC 10063 / NRRL Y-11545</strain>
    </source>
</reference>
<proteinExistence type="inferred from homology"/>
<protein>
    <recommendedName>
        <fullName evidence="1">Lon protease homolog, mitochondrial</fullName>
        <ecNumber evidence="1">3.4.21.53</ecNumber>
    </recommendedName>
</protein>
<sequence length="1086" mass="120080">MLRTSCTSSLRRVVGKYVVSPLVASQIRFATSSVRSQPYLLNSELTELPAQFKRYSSILLTEKPEGDVPESGPEPSGESGISEKSNVENDKHDGNDEIKPEAEKNEKDEIEKPEIDKDAIVETDGVSESSVENVSGSSSAAGGASAPPSGNSNNNNNNNNNNNDNDEPNEIVTNAGTGLYPPLLAIPMKDRPPLPGRPFAINITDPEVIRSIYTIIDKREPYFVLFHVKDPNEGDTDVINSKDSVYNIGVHCQIIRHTTPRPGVFNVLGYPLERCSLADLSTPSEKKGETETRKEGENFPTSYLKGLKVSYATVKPVKDEPFDKTSTDIKSLVESLKALLSKMGAKNPLEKLQIKEGTELVNDPPRFADFVGSTIHGDPKKIQEILESLNIQTRLSKALELLKVELKASLIKENTIHNLSTKADEYQTRLFIKEFIKELQKRAGIVESDDKKTSKFDERLKHLKMTEEALEAYNAEKAKMESQNEHSSELGVSERYLDWLTSIPWGIYSKDRFNIKQAREILDRDHYGLKDVKDRILEFISMGRVSGKVDGKILCLTGPPGTGKTSIAKSIAESLNRKYVRIAMGGIQDVHEVKGHRRTYVGSIPGRIISALKQAKTSNPLMLIDEIDKLDLSRSGGASSAFLEILDPEQNNAFVDNYIDVKVDLSKVLFVCTANYLGNISPPLRDRMEIIEVNGYTNNEKIEIAKRHLIPDAAKKAGLEGGHVVIETKTISRLIEKYCRESGLRNIKKLITRIFSKASLKIVEEVEAREGESKSKSEEAKSEAITGSVTEISVEDATVKAQSIEEPSVESASQKVDEAKPVESEELKSDEEEEEVVKLEIPDDIKLEITSANLKDYVGPEIYTRDRVYDIPPPGVATGLSYSTSGNGDALYIESILTHSIGSGSGHASIHVTGSLKDVMKESASIAYSFAKSYMVKNYPENRFFEAAEIHVHCPDGAIPKDGPSAGISFTSSLISLALQKPLPPTIAMTGEITVTGRVLAVGGLREKILGAKRYGCNTIIFPKDIENELEEIPEEVKEGVKFIPVEWYQDVFDEIFPNLSSDEGNEVWKEEFNKLDKKKASNKKK</sequence>
<dbReference type="EC" id="3.4.21.53" evidence="1"/>
<dbReference type="EMBL" id="CP000502">
    <property type="protein sequence ID" value="ABN68665.2"/>
    <property type="status" value="ALT_INIT"/>
    <property type="molecule type" value="Genomic_DNA"/>
</dbReference>
<dbReference type="RefSeq" id="XP_001386694.2">
    <property type="nucleotide sequence ID" value="XM_001386657.1"/>
</dbReference>
<dbReference type="SMR" id="A3M072"/>
<dbReference type="FunCoup" id="A3M072">
    <property type="interactions" value="1025"/>
</dbReference>
<dbReference type="STRING" id="322104.A3M072"/>
<dbReference type="GeneID" id="4840951"/>
<dbReference type="KEGG" id="pic:PICST_64463"/>
<dbReference type="eggNOG" id="KOG2004">
    <property type="taxonomic scope" value="Eukaryota"/>
</dbReference>
<dbReference type="HOGENOM" id="CLU_004109_1_0_1"/>
<dbReference type="InParanoid" id="A3M072"/>
<dbReference type="OrthoDB" id="2411602at2759"/>
<dbReference type="Proteomes" id="UP000002258">
    <property type="component" value="Chromosome 8"/>
</dbReference>
<dbReference type="GO" id="GO:0005759">
    <property type="term" value="C:mitochondrial matrix"/>
    <property type="evidence" value="ECO:0007669"/>
    <property type="project" value="UniProtKB-SubCell"/>
</dbReference>
<dbReference type="GO" id="GO:0005524">
    <property type="term" value="F:ATP binding"/>
    <property type="evidence" value="ECO:0007669"/>
    <property type="project" value="UniProtKB-KW"/>
</dbReference>
<dbReference type="GO" id="GO:0016887">
    <property type="term" value="F:ATP hydrolysis activity"/>
    <property type="evidence" value="ECO:0007669"/>
    <property type="project" value="InterPro"/>
</dbReference>
<dbReference type="GO" id="GO:0004176">
    <property type="term" value="F:ATP-dependent peptidase activity"/>
    <property type="evidence" value="ECO:0007669"/>
    <property type="project" value="InterPro"/>
</dbReference>
<dbReference type="GO" id="GO:0004252">
    <property type="term" value="F:serine-type endopeptidase activity"/>
    <property type="evidence" value="ECO:0007669"/>
    <property type="project" value="UniProtKB-EC"/>
</dbReference>
<dbReference type="GO" id="GO:0003697">
    <property type="term" value="F:single-stranded DNA binding"/>
    <property type="evidence" value="ECO:0007669"/>
    <property type="project" value="TreeGrafter"/>
</dbReference>
<dbReference type="GO" id="GO:0051131">
    <property type="term" value="P:chaperone-mediated protein complex assembly"/>
    <property type="evidence" value="ECO:0007669"/>
    <property type="project" value="TreeGrafter"/>
</dbReference>
<dbReference type="GO" id="GO:0007005">
    <property type="term" value="P:mitochondrion organization"/>
    <property type="evidence" value="ECO:0007669"/>
    <property type="project" value="TreeGrafter"/>
</dbReference>
<dbReference type="GO" id="GO:0006515">
    <property type="term" value="P:protein quality control for misfolded or incompletely synthesized proteins"/>
    <property type="evidence" value="ECO:0007669"/>
    <property type="project" value="InterPro"/>
</dbReference>
<dbReference type="CDD" id="cd19500">
    <property type="entry name" value="RecA-like_Lon"/>
    <property type="match status" value="1"/>
</dbReference>
<dbReference type="FunFam" id="3.40.50.300:FF:000021">
    <property type="entry name" value="Lon protease homolog"/>
    <property type="match status" value="1"/>
</dbReference>
<dbReference type="Gene3D" id="1.10.8.60">
    <property type="match status" value="1"/>
</dbReference>
<dbReference type="Gene3D" id="1.20.5.5270">
    <property type="match status" value="1"/>
</dbReference>
<dbReference type="Gene3D" id="1.20.58.1480">
    <property type="match status" value="1"/>
</dbReference>
<dbReference type="Gene3D" id="3.30.230.10">
    <property type="match status" value="1"/>
</dbReference>
<dbReference type="Gene3D" id="2.30.130.40">
    <property type="entry name" value="LON domain-like"/>
    <property type="match status" value="1"/>
</dbReference>
<dbReference type="Gene3D" id="3.40.50.300">
    <property type="entry name" value="P-loop containing nucleotide triphosphate hydrolases"/>
    <property type="match status" value="1"/>
</dbReference>
<dbReference type="HAMAP" id="MF_03120">
    <property type="entry name" value="lonm_euk"/>
    <property type="match status" value="1"/>
</dbReference>
<dbReference type="InterPro" id="IPR003593">
    <property type="entry name" value="AAA+_ATPase"/>
</dbReference>
<dbReference type="InterPro" id="IPR003959">
    <property type="entry name" value="ATPase_AAA_core"/>
</dbReference>
<dbReference type="InterPro" id="IPR004815">
    <property type="entry name" value="Lon_bac/euk-typ"/>
</dbReference>
<dbReference type="InterPro" id="IPR054594">
    <property type="entry name" value="Lon_lid"/>
</dbReference>
<dbReference type="InterPro" id="IPR008269">
    <property type="entry name" value="Lon_proteolytic"/>
</dbReference>
<dbReference type="InterPro" id="IPR027065">
    <property type="entry name" value="Lon_Prtase"/>
</dbReference>
<dbReference type="InterPro" id="IPR003111">
    <property type="entry name" value="Lon_prtase_N"/>
</dbReference>
<dbReference type="InterPro" id="IPR046336">
    <property type="entry name" value="Lon_prtase_N_sf"/>
</dbReference>
<dbReference type="InterPro" id="IPR027503">
    <property type="entry name" value="Lonm_euk"/>
</dbReference>
<dbReference type="InterPro" id="IPR027417">
    <property type="entry name" value="P-loop_NTPase"/>
</dbReference>
<dbReference type="InterPro" id="IPR015947">
    <property type="entry name" value="PUA-like_sf"/>
</dbReference>
<dbReference type="InterPro" id="IPR020568">
    <property type="entry name" value="Ribosomal_Su5_D2-typ_SF"/>
</dbReference>
<dbReference type="InterPro" id="IPR014721">
    <property type="entry name" value="Ribsml_uS5_D2-typ_fold_subgr"/>
</dbReference>
<dbReference type="NCBIfam" id="TIGR00763">
    <property type="entry name" value="lon"/>
    <property type="match status" value="1"/>
</dbReference>
<dbReference type="PANTHER" id="PTHR43718">
    <property type="entry name" value="LON PROTEASE"/>
    <property type="match status" value="1"/>
</dbReference>
<dbReference type="PANTHER" id="PTHR43718:SF2">
    <property type="entry name" value="LON PROTEASE HOMOLOG, MITOCHONDRIAL"/>
    <property type="match status" value="1"/>
</dbReference>
<dbReference type="Pfam" id="PF00004">
    <property type="entry name" value="AAA"/>
    <property type="match status" value="1"/>
</dbReference>
<dbReference type="Pfam" id="PF05362">
    <property type="entry name" value="Lon_C"/>
    <property type="match status" value="1"/>
</dbReference>
<dbReference type="Pfam" id="PF22667">
    <property type="entry name" value="Lon_lid"/>
    <property type="match status" value="1"/>
</dbReference>
<dbReference type="Pfam" id="PF02190">
    <property type="entry name" value="LON_substr_bdg"/>
    <property type="match status" value="1"/>
</dbReference>
<dbReference type="PRINTS" id="PR00830">
    <property type="entry name" value="ENDOLAPTASE"/>
</dbReference>
<dbReference type="SMART" id="SM00382">
    <property type="entry name" value="AAA"/>
    <property type="match status" value="1"/>
</dbReference>
<dbReference type="SMART" id="SM00464">
    <property type="entry name" value="LON"/>
    <property type="match status" value="1"/>
</dbReference>
<dbReference type="SUPFAM" id="SSF52540">
    <property type="entry name" value="P-loop containing nucleoside triphosphate hydrolases"/>
    <property type="match status" value="1"/>
</dbReference>
<dbReference type="SUPFAM" id="SSF88697">
    <property type="entry name" value="PUA domain-like"/>
    <property type="match status" value="1"/>
</dbReference>
<dbReference type="SUPFAM" id="SSF54211">
    <property type="entry name" value="Ribosomal protein S5 domain 2-like"/>
    <property type="match status" value="1"/>
</dbReference>
<dbReference type="PROSITE" id="PS51787">
    <property type="entry name" value="LON_N"/>
    <property type="match status" value="1"/>
</dbReference>
<dbReference type="PROSITE" id="PS51786">
    <property type="entry name" value="LON_PROTEOLYTIC"/>
    <property type="match status" value="1"/>
</dbReference>
<comment type="function">
    <text evidence="1">ATP-dependent serine protease that mediates the selective degradation of misfolded, unassembled or oxidatively damaged polypeptides as well as certain short-lived regulatory proteins in the mitochondrial matrix. May also have a chaperone function in the assembly of inner membrane protein complexes. Participates in the regulation of mitochondrial gene expression and in the maintenance of the integrity of the mitochondrial genome. Binds to mitochondrial DNA in a site-specific manner.</text>
</comment>
<comment type="catalytic activity">
    <reaction evidence="1">
        <text>Hydrolysis of proteins in presence of ATP.</text>
        <dbReference type="EC" id="3.4.21.53"/>
    </reaction>
</comment>
<comment type="subunit">
    <text evidence="1">Homohexamer or homoheptamer. Organized in a ring with a central cavity.</text>
</comment>
<comment type="subcellular location">
    <subcellularLocation>
        <location evidence="1">Mitochondrion matrix</location>
    </subcellularLocation>
</comment>
<comment type="similarity">
    <text evidence="1">Belongs to the peptidase S16 family.</text>
</comment>
<comment type="sequence caution" evidence="5">
    <conflict type="erroneous initiation">
        <sequence resource="EMBL-CDS" id="ABN68665"/>
    </conflict>
    <text>Truncated N-terminus.</text>
</comment>
<keyword id="KW-0067">ATP-binding</keyword>
<keyword id="KW-0238">DNA-binding</keyword>
<keyword id="KW-0378">Hydrolase</keyword>
<keyword id="KW-0496">Mitochondrion</keyword>
<keyword id="KW-0547">Nucleotide-binding</keyword>
<keyword id="KW-0645">Protease</keyword>
<keyword id="KW-1185">Reference proteome</keyword>
<keyword id="KW-0720">Serine protease</keyword>
<keyword id="KW-0809">Transit peptide</keyword>